<name>HUGA_POLAN</name>
<comment type="function">
    <text evidence="1">May play a role in reproduction.</text>
</comment>
<comment type="catalytic activity">
    <reaction>
        <text>Random hydrolysis of (1-&gt;4)-linkages between N-acetyl-beta-D-glucosamine and D-glucuronate residues in hyaluronate.</text>
        <dbReference type="EC" id="3.2.1.35"/>
    </reaction>
</comment>
<comment type="allergen">
    <text>Causes an allergic reaction in human.</text>
</comment>
<comment type="similarity">
    <text evidence="3">Belongs to the glycosyl hydrolase 56 family.</text>
</comment>
<accession>Q9U6V9</accession>
<protein>
    <recommendedName>
        <fullName>Hyaluronidase</fullName>
        <shortName>Hya</shortName>
        <ecNumber>3.2.1.35</ecNumber>
    </recommendedName>
    <alternativeName>
        <fullName>Hyaluronoglucosaminidase</fullName>
    </alternativeName>
    <allergenName>Pol a 2</allergenName>
</protein>
<reference key="1">
    <citation type="submission" date="1999-08" db="EMBL/GenBank/DDBJ databases">
        <authorList>
            <person name="King T.P."/>
            <person name="Lu G."/>
        </authorList>
    </citation>
    <scope>NUCLEOTIDE SEQUENCE [MRNA]</scope>
</reference>
<organism>
    <name type="scientific">Polistes annularis</name>
    <name type="common">Paper wasp</name>
    <dbReference type="NCBI Taxonomy" id="27505"/>
    <lineage>
        <taxon>Eukaryota</taxon>
        <taxon>Metazoa</taxon>
        <taxon>Ecdysozoa</taxon>
        <taxon>Arthropoda</taxon>
        <taxon>Hexapoda</taxon>
        <taxon>Insecta</taxon>
        <taxon>Pterygota</taxon>
        <taxon>Neoptera</taxon>
        <taxon>Endopterygota</taxon>
        <taxon>Hymenoptera</taxon>
        <taxon>Apocrita</taxon>
        <taxon>Aculeata</taxon>
        <taxon>Vespoidea</taxon>
        <taxon>Vespidae</taxon>
        <taxon>Polistinae</taxon>
        <taxon>Polistini</taxon>
        <taxon>Polistes</taxon>
    </lineage>
</organism>
<keyword id="KW-0020">Allergen</keyword>
<keyword id="KW-1015">Disulfide bond</keyword>
<keyword id="KW-0325">Glycoprotein</keyword>
<keyword id="KW-0326">Glycosidase</keyword>
<keyword id="KW-0378">Hydrolase</keyword>
<keyword id="KW-0732">Signal</keyword>
<keyword id="KW-0865">Zymogen</keyword>
<sequence>YVSLSPDSVFNIITDDISHQILSRSNCERSKRPKRVFSIYWNVPTFMCHQYGMNFDEVTDFNIKHNSKDNFRGETISIYYDPGKFPALMPLKNGNYEERNGGVPQRGNITIHLQQFNEDLDKMTPDKNFGGIGVIDFERWKPIFRQNWGNTEIHKKYSIELVRKEHPKWSESMIEAEATKKFEKYARYFMEETLKLAKKTRKRAKWGYYGFPYCYNVTPNNPGPDCDAKATIENDRLSWMYNNQEILFPSVYVRHEQKPEERVYLVQGRIKEAVRISNNLEHSPSVLAYWWYVYQDKMDIYLSETDVEKTFQEIVTNGGDGIIIWGSSSDVNSLSKCKRLREYLLNTLGPFAVNVTETVNGRSSLNF</sequence>
<proteinExistence type="evidence at protein level"/>
<evidence type="ECO:0000250" key="1"/>
<evidence type="ECO:0000255" key="2"/>
<evidence type="ECO:0000305" key="3"/>
<dbReference type="EC" id="3.2.1.35"/>
<dbReference type="EMBL" id="AF174528">
    <property type="protein sequence ID" value="AAD52616.1"/>
    <property type="molecule type" value="mRNA"/>
</dbReference>
<dbReference type="SMR" id="Q9U6V9"/>
<dbReference type="Allergome" id="3431">
    <property type="allergen name" value="Pol a 2.0101"/>
</dbReference>
<dbReference type="Allergome" id="584">
    <property type="allergen name" value="Pol a 2"/>
</dbReference>
<dbReference type="CAZy" id="GH56">
    <property type="family name" value="Glycoside Hydrolase Family 56"/>
</dbReference>
<dbReference type="GO" id="GO:0004415">
    <property type="term" value="F:hyalurononglucosaminidase activity"/>
    <property type="evidence" value="ECO:0007669"/>
    <property type="project" value="UniProtKB-EC"/>
</dbReference>
<dbReference type="GO" id="GO:0005975">
    <property type="term" value="P:carbohydrate metabolic process"/>
    <property type="evidence" value="ECO:0007669"/>
    <property type="project" value="InterPro"/>
</dbReference>
<dbReference type="GO" id="GO:0006952">
    <property type="term" value="P:defense response"/>
    <property type="evidence" value="ECO:0007669"/>
    <property type="project" value="InterPro"/>
</dbReference>
<dbReference type="GO" id="GO:0030214">
    <property type="term" value="P:hyaluronan catabolic process"/>
    <property type="evidence" value="ECO:0007669"/>
    <property type="project" value="TreeGrafter"/>
</dbReference>
<dbReference type="FunFam" id="3.20.20.70:FF:000366">
    <property type="entry name" value="Hyaluronidase"/>
    <property type="match status" value="1"/>
</dbReference>
<dbReference type="Gene3D" id="3.20.20.70">
    <property type="entry name" value="Aldolase class I"/>
    <property type="match status" value="1"/>
</dbReference>
<dbReference type="InterPro" id="IPR013785">
    <property type="entry name" value="Aldolase_TIM"/>
</dbReference>
<dbReference type="InterPro" id="IPR017853">
    <property type="entry name" value="Glycoside_hydrolase_SF"/>
</dbReference>
<dbReference type="InterPro" id="IPR018155">
    <property type="entry name" value="Hyaluronidase"/>
</dbReference>
<dbReference type="InterPro" id="IPR001329">
    <property type="entry name" value="Venom_Hyaluronidase"/>
</dbReference>
<dbReference type="PANTHER" id="PTHR11769">
    <property type="entry name" value="HYALURONIDASE"/>
    <property type="match status" value="1"/>
</dbReference>
<dbReference type="PANTHER" id="PTHR11769:SF35">
    <property type="entry name" value="HYALURONIDASE"/>
    <property type="match status" value="1"/>
</dbReference>
<dbReference type="Pfam" id="PF01630">
    <property type="entry name" value="Glyco_hydro_56"/>
    <property type="match status" value="1"/>
</dbReference>
<dbReference type="PIRSF" id="PIRSF038193">
    <property type="entry name" value="Hyaluronidase"/>
    <property type="match status" value="1"/>
</dbReference>
<dbReference type="PRINTS" id="PR00846">
    <property type="entry name" value="GLHYDRLASE56"/>
</dbReference>
<dbReference type="PRINTS" id="PR00847">
    <property type="entry name" value="HYALURONDASE"/>
</dbReference>
<dbReference type="SUPFAM" id="SSF51445">
    <property type="entry name" value="(Trans)glycosidases"/>
    <property type="match status" value="1"/>
</dbReference>
<feature type="signal peptide">
    <location>
        <begin position="1" status="less than"/>
        <end status="unknown"/>
    </location>
</feature>
<feature type="propeptide" id="PRO_0000012107">
    <location>
        <begin status="unknown"/>
        <end position="29"/>
    </location>
</feature>
<feature type="chain" id="PRO_0000012108" description="Hyaluronidase">
    <location>
        <begin position="30"/>
        <end position="367"/>
    </location>
</feature>
<feature type="active site" description="Proton donor" evidence="1">
    <location>
        <position position="138"/>
    </location>
</feature>
<feature type="glycosylation site" description="N-linked (GlcNAc...) asparagine" evidence="2">
    <location>
        <position position="108"/>
    </location>
</feature>
<feature type="glycosylation site" description="N-linked (GlcNAc...) asparagine" evidence="2">
    <location>
        <position position="354"/>
    </location>
</feature>
<feature type="disulfide bond" evidence="1">
    <location>
        <begin position="48"/>
        <end position="337"/>
    </location>
</feature>
<feature type="disulfide bond" evidence="1">
    <location>
        <begin position="214"/>
        <end position="226"/>
    </location>
</feature>
<feature type="non-terminal residue">
    <location>
        <position position="1"/>
    </location>
</feature>